<feature type="chain" id="PRO_0000110045" description="Fluoride-specific ion channel FluC 1">
    <location>
        <begin position="1"/>
        <end position="137"/>
    </location>
</feature>
<feature type="transmembrane region" description="Helical" evidence="1">
    <location>
        <begin position="4"/>
        <end position="24"/>
    </location>
</feature>
<feature type="transmembrane region" description="Helical" evidence="1">
    <location>
        <begin position="37"/>
        <end position="57"/>
    </location>
</feature>
<feature type="transmembrane region" description="Helical" evidence="1">
    <location>
        <begin position="67"/>
        <end position="87"/>
    </location>
</feature>
<feature type="transmembrane region" description="Helical" evidence="1">
    <location>
        <begin position="98"/>
        <end position="118"/>
    </location>
</feature>
<feature type="binding site" evidence="1">
    <location>
        <position position="77"/>
    </location>
    <ligand>
        <name>Na(+)</name>
        <dbReference type="ChEBI" id="CHEBI:29101"/>
        <note>structural</note>
    </ligand>
</feature>
<feature type="binding site" evidence="1">
    <location>
        <position position="80"/>
    </location>
    <ligand>
        <name>Na(+)</name>
        <dbReference type="ChEBI" id="CHEBI:29101"/>
        <note>structural</note>
    </ligand>
</feature>
<comment type="function">
    <text evidence="1">Fluoride-specific ion channel. Important for reducing fluoride concentration in the cell, thus reducing its toxicity.</text>
</comment>
<comment type="catalytic activity">
    <reaction evidence="1">
        <text>fluoride(in) = fluoride(out)</text>
        <dbReference type="Rhea" id="RHEA:76159"/>
        <dbReference type="ChEBI" id="CHEBI:17051"/>
    </reaction>
    <physiologicalReaction direction="left-to-right" evidence="1">
        <dbReference type="Rhea" id="RHEA:76160"/>
    </physiologicalReaction>
</comment>
<comment type="activity regulation">
    <text evidence="1">Na(+) is not transported, but it plays an essential structural role and its presence is essential for fluoride channel function.</text>
</comment>
<comment type="subcellular location">
    <subcellularLocation>
        <location evidence="1">Cell membrane</location>
        <topology evidence="1">Multi-pass membrane protein</topology>
    </subcellularLocation>
</comment>
<comment type="similarity">
    <text evidence="1">Belongs to the fluoride channel Fluc/FEX (TC 1.A.43) family.</text>
</comment>
<reference key="1">
    <citation type="journal article" date="2006" name="J. Bacteriol.">
        <title>Pathogenomic sequence analysis of Bacillus cereus and Bacillus thuringiensis isolates closely related to Bacillus anthracis.</title>
        <authorList>
            <person name="Han C.S."/>
            <person name="Xie G."/>
            <person name="Challacombe J.F."/>
            <person name="Altherr M.R."/>
            <person name="Bhotika S.S."/>
            <person name="Bruce D."/>
            <person name="Campbell C.S."/>
            <person name="Campbell M.L."/>
            <person name="Chen J."/>
            <person name="Chertkov O."/>
            <person name="Cleland C."/>
            <person name="Dimitrijevic M."/>
            <person name="Doggett N.A."/>
            <person name="Fawcett J.J."/>
            <person name="Glavina T."/>
            <person name="Goodwin L.A."/>
            <person name="Hill K.K."/>
            <person name="Hitchcock P."/>
            <person name="Jackson P.J."/>
            <person name="Keim P."/>
            <person name="Kewalramani A.R."/>
            <person name="Longmire J."/>
            <person name="Lucas S."/>
            <person name="Malfatti S."/>
            <person name="McMurry K."/>
            <person name="Meincke L.J."/>
            <person name="Misra M."/>
            <person name="Moseman B.L."/>
            <person name="Mundt M."/>
            <person name="Munk A.C."/>
            <person name="Okinaka R.T."/>
            <person name="Parson-Quintana B."/>
            <person name="Reilly L.P."/>
            <person name="Richardson P."/>
            <person name="Robinson D.L."/>
            <person name="Rubin E."/>
            <person name="Saunders E."/>
            <person name="Tapia R."/>
            <person name="Tesmer J.G."/>
            <person name="Thayer N."/>
            <person name="Thompson L.S."/>
            <person name="Tice H."/>
            <person name="Ticknor L.O."/>
            <person name="Wills P.L."/>
            <person name="Brettin T.S."/>
            <person name="Gilna P."/>
        </authorList>
    </citation>
    <scope>NUCLEOTIDE SEQUENCE [LARGE SCALE GENOMIC DNA]</scope>
    <source>
        <strain>ZK / E33L</strain>
    </source>
</reference>
<protein>
    <recommendedName>
        <fullName evidence="1">Fluoride-specific ion channel FluC 1</fullName>
    </recommendedName>
</protein>
<proteinExistence type="inferred from homology"/>
<gene>
    <name evidence="1" type="primary">fluC1</name>
    <name evidence="1" type="synonym">crcB1</name>
    <name type="ordered locus">BCE33L4802</name>
</gene>
<dbReference type="EMBL" id="CP000001">
    <property type="protein sequence ID" value="AAU15471.1"/>
    <property type="molecule type" value="Genomic_DNA"/>
</dbReference>
<dbReference type="SMR" id="Q631P4"/>
<dbReference type="KEGG" id="bcz:BCE33L4802"/>
<dbReference type="Proteomes" id="UP000002612">
    <property type="component" value="Chromosome"/>
</dbReference>
<dbReference type="GO" id="GO:0005886">
    <property type="term" value="C:plasma membrane"/>
    <property type="evidence" value="ECO:0007669"/>
    <property type="project" value="UniProtKB-SubCell"/>
</dbReference>
<dbReference type="GO" id="GO:0062054">
    <property type="term" value="F:fluoride channel activity"/>
    <property type="evidence" value="ECO:0007669"/>
    <property type="project" value="UniProtKB-UniRule"/>
</dbReference>
<dbReference type="GO" id="GO:0046872">
    <property type="term" value="F:metal ion binding"/>
    <property type="evidence" value="ECO:0007669"/>
    <property type="project" value="UniProtKB-KW"/>
</dbReference>
<dbReference type="GO" id="GO:0140114">
    <property type="term" value="P:cellular detoxification of fluoride"/>
    <property type="evidence" value="ECO:0007669"/>
    <property type="project" value="UniProtKB-UniRule"/>
</dbReference>
<dbReference type="HAMAP" id="MF_00454">
    <property type="entry name" value="FluC"/>
    <property type="match status" value="1"/>
</dbReference>
<dbReference type="InterPro" id="IPR003691">
    <property type="entry name" value="FluC"/>
</dbReference>
<dbReference type="NCBIfam" id="TIGR00494">
    <property type="entry name" value="crcB"/>
    <property type="match status" value="1"/>
</dbReference>
<dbReference type="PANTHER" id="PTHR28259">
    <property type="entry name" value="FLUORIDE EXPORT PROTEIN 1-RELATED"/>
    <property type="match status" value="1"/>
</dbReference>
<dbReference type="PANTHER" id="PTHR28259:SF1">
    <property type="entry name" value="FLUORIDE EXPORT PROTEIN 1-RELATED"/>
    <property type="match status" value="1"/>
</dbReference>
<dbReference type="Pfam" id="PF02537">
    <property type="entry name" value="CRCB"/>
    <property type="match status" value="1"/>
</dbReference>
<keyword id="KW-1003">Cell membrane</keyword>
<keyword id="KW-0407">Ion channel</keyword>
<keyword id="KW-0406">Ion transport</keyword>
<keyword id="KW-0472">Membrane</keyword>
<keyword id="KW-0479">Metal-binding</keyword>
<keyword id="KW-0915">Sodium</keyword>
<keyword id="KW-0812">Transmembrane</keyword>
<keyword id="KW-1133">Transmembrane helix</keyword>
<keyword id="KW-0813">Transport</keyword>
<evidence type="ECO:0000255" key="1">
    <source>
        <dbReference type="HAMAP-Rule" id="MF_00454"/>
    </source>
</evidence>
<organism>
    <name type="scientific">Bacillus cereus (strain ZK / E33L)</name>
    <dbReference type="NCBI Taxonomy" id="288681"/>
    <lineage>
        <taxon>Bacteria</taxon>
        <taxon>Bacillati</taxon>
        <taxon>Bacillota</taxon>
        <taxon>Bacilli</taxon>
        <taxon>Bacillales</taxon>
        <taxon>Bacillaceae</taxon>
        <taxon>Bacillus</taxon>
        <taxon>Bacillus cereus group</taxon>
    </lineage>
</organism>
<sequence>MRKLIYIMVGIAGILGALSRYYLGLTIHEFWHHTFPLATLLINLAGCFLLAWLTTYIAKLNILPSDVITGIGTGFIGSFTTFSTFSVETIQLINHFEWGIAFLYVSCSILGGLIMSGLGYTLGDFLLKKHLTEGDHL</sequence>
<accession>Q631P4</accession>
<name>FLUC1_BACCZ</name>